<organism>
    <name type="scientific">Candida albicans (strain SC5314 / ATCC MYA-2876)</name>
    <name type="common">Yeast</name>
    <dbReference type="NCBI Taxonomy" id="237561"/>
    <lineage>
        <taxon>Eukaryota</taxon>
        <taxon>Fungi</taxon>
        <taxon>Dikarya</taxon>
        <taxon>Ascomycota</taxon>
        <taxon>Saccharomycotina</taxon>
        <taxon>Pichiomycetes</taxon>
        <taxon>Debaryomycetaceae</taxon>
        <taxon>Candida/Lodderomyces clade</taxon>
        <taxon>Candida</taxon>
    </lineage>
</organism>
<proteinExistence type="inferred from homology"/>
<gene>
    <name type="ordered locus">CAALFM_C306160CA</name>
    <name type="ORF">orf19.7397.1</name>
</gene>
<name>NSA2B_CANAL</name>
<evidence type="ECO:0000250" key="1"/>
<evidence type="ECO:0000250" key="2">
    <source>
        <dbReference type="UniProtKB" id="P40078"/>
    </source>
</evidence>
<evidence type="ECO:0000255" key="3">
    <source>
        <dbReference type="PROSITE-ProRule" id="PRU00768"/>
    </source>
</evidence>
<evidence type="ECO:0000256" key="4">
    <source>
        <dbReference type="SAM" id="MobiDB-lite"/>
    </source>
</evidence>
<evidence type="ECO:0000305" key="5"/>
<feature type="chain" id="PRO_0000439056" description="Ribosome biogenesis protein C3_06160C_A">
    <location>
        <begin position="1"/>
        <end position="261"/>
    </location>
</feature>
<feature type="region of interest" description="Disordered" evidence="4">
    <location>
        <begin position="1"/>
        <end position="38"/>
    </location>
</feature>
<feature type="region of interest" description="Disordered" evidence="4">
    <location>
        <begin position="59"/>
        <end position="85"/>
    </location>
</feature>
<feature type="short sequence motif" description="Nuclear localization signal 1" evidence="3">
    <location>
        <begin position="11"/>
        <end position="18"/>
    </location>
</feature>
<feature type="short sequence motif" description="Nuclear localization signal 2" evidence="3">
    <location>
        <begin position="51"/>
        <end position="58"/>
    </location>
</feature>
<feature type="compositionally biased region" description="Basic and acidic residues" evidence="4">
    <location>
        <begin position="17"/>
        <end position="37"/>
    </location>
</feature>
<comment type="function">
    <text evidence="1">Involved in the biogenesis of the 60S ribosomal subunit. May play a part in the quality control of pre-60S particles (By similarity).</text>
</comment>
<comment type="subunit">
    <text evidence="2">Component of the pre-66S ribosomal particle. Interacts with NOP7 and RRP1. Interacts with RSA4 (via WD repeats).</text>
</comment>
<comment type="subcellular location">
    <subcellularLocation>
        <location evidence="1">Nucleus</location>
        <location evidence="1">Nucleolus</location>
    </subcellularLocation>
</comment>
<comment type="similarity">
    <text evidence="5">Belongs to the eukaryotic ribosomal protein eS8 family. Ribosome biogenesis protein NSA2 subfamily.</text>
</comment>
<sequence length="261" mass="29578">MPQNEYIEQHIKKHGRRLDYEERKRKKEAREGHRVAKDAQTLKGWRAKQFAKKRYAEKVAMKKKIKAHQESKVKGPSTPKAEDGEALPTYLLDRQTNNTAKAISSSIKQKRLEKADKFQVPLPKVKGISEEEMFKVIKTGKSKSKSWKRMITKHTFVGEGFTRRPVKMERIIRPAALRQKKANVTHPELGVTVFLPILGVKKNPQSPMYTQLGVLTKGTIIEVNVSELGLVTAGGKVVWGKYAQITNEPDRDGCVNAVLLV</sequence>
<accession>P0CU36</accession>
<accession>A0A1D8PKJ6</accession>
<dbReference type="EMBL" id="CP017625">
    <property type="protein sequence ID" value="AOW28623.1"/>
    <property type="molecule type" value="Genomic_DNA"/>
</dbReference>
<dbReference type="RefSeq" id="XP_716639.2">
    <property type="nucleotide sequence ID" value="XM_711546.2"/>
</dbReference>
<dbReference type="SMR" id="P0CU36"/>
<dbReference type="FunCoup" id="P0CU36">
    <property type="interactions" value="1281"/>
</dbReference>
<dbReference type="STRING" id="237561.P0CU36"/>
<dbReference type="EnsemblFungi" id="C3_06160C_A-T">
    <property type="protein sequence ID" value="C3_06160C_A-T-p1"/>
    <property type="gene ID" value="C3_06160C_A"/>
</dbReference>
<dbReference type="EnsemblFungi" id="C3_06380W_A-T">
    <property type="protein sequence ID" value="C3_06380W_A-T-p1"/>
    <property type="gene ID" value="C3_06380W_A"/>
</dbReference>
<dbReference type="GeneID" id="3641766"/>
<dbReference type="KEGG" id="cal:CAALFM_C306160CA"/>
<dbReference type="KEGG" id="cal:CAALFM_C306380WA"/>
<dbReference type="VEuPathDB" id="FungiDB:C3_06160C_A"/>
<dbReference type="VEuPathDB" id="FungiDB:C3_06380W_A"/>
<dbReference type="eggNOG" id="KOG3163">
    <property type="taxonomic scope" value="Eukaryota"/>
</dbReference>
<dbReference type="InParanoid" id="P0CU36"/>
<dbReference type="OMA" id="TNTPEND"/>
<dbReference type="OrthoDB" id="1847590at2759"/>
<dbReference type="Proteomes" id="UP000000559">
    <property type="component" value="Chromosome 3"/>
</dbReference>
<dbReference type="GO" id="GO:0005730">
    <property type="term" value="C:nucleolus"/>
    <property type="evidence" value="ECO:0007669"/>
    <property type="project" value="UniProtKB-SubCell"/>
</dbReference>
<dbReference type="GO" id="GO:0030687">
    <property type="term" value="C:preribosome, large subunit precursor"/>
    <property type="evidence" value="ECO:0000318"/>
    <property type="project" value="GO_Central"/>
</dbReference>
<dbReference type="GO" id="GO:0000460">
    <property type="term" value="P:maturation of 5.8S rRNA"/>
    <property type="evidence" value="ECO:0000318"/>
    <property type="project" value="GO_Central"/>
</dbReference>
<dbReference type="GO" id="GO:0000470">
    <property type="term" value="P:maturation of LSU-rRNA"/>
    <property type="evidence" value="ECO:0000318"/>
    <property type="project" value="GO_Central"/>
</dbReference>
<dbReference type="CDD" id="cd11381">
    <property type="entry name" value="NSA2"/>
    <property type="match status" value="1"/>
</dbReference>
<dbReference type="FunFam" id="2.40.10.310:FF:000001">
    <property type="entry name" value="NSA2, ribosome biogenesis homolog"/>
    <property type="match status" value="1"/>
</dbReference>
<dbReference type="Gene3D" id="2.40.10.310">
    <property type="match status" value="1"/>
</dbReference>
<dbReference type="InterPro" id="IPR039411">
    <property type="entry name" value="NSA2_fam"/>
</dbReference>
<dbReference type="InterPro" id="IPR022309">
    <property type="entry name" value="Ribosomal_Se8/biogenesis_NSA2"/>
</dbReference>
<dbReference type="PANTHER" id="PTHR12642">
    <property type="entry name" value="RIBOSOME BIOGENESIS PROTEIN NSA2 HOMOLOG"/>
    <property type="match status" value="1"/>
</dbReference>
<dbReference type="Pfam" id="PF01201">
    <property type="entry name" value="Ribosomal_S8e"/>
    <property type="match status" value="1"/>
</dbReference>
<protein>
    <recommendedName>
        <fullName>Ribosome biogenesis protein C3_06160C_A</fullName>
    </recommendedName>
</protein>
<keyword id="KW-0539">Nucleus</keyword>
<keyword id="KW-1185">Reference proteome</keyword>
<keyword id="KW-0687">Ribonucleoprotein</keyword>
<keyword id="KW-0690">Ribosome biogenesis</keyword>
<keyword id="KW-0698">rRNA processing</keyword>
<reference key="1">
    <citation type="journal article" date="2004" name="Proc. Natl. Acad. Sci. U.S.A.">
        <title>The diploid genome sequence of Candida albicans.</title>
        <authorList>
            <person name="Jones T."/>
            <person name="Federspiel N.A."/>
            <person name="Chibana H."/>
            <person name="Dungan J."/>
            <person name="Kalman S."/>
            <person name="Magee B.B."/>
            <person name="Newport G."/>
            <person name="Thorstenson Y.R."/>
            <person name="Agabian N."/>
            <person name="Magee P.T."/>
            <person name="Davis R.W."/>
            <person name="Scherer S."/>
        </authorList>
    </citation>
    <scope>NUCLEOTIDE SEQUENCE [LARGE SCALE GENOMIC DNA]</scope>
    <source>
        <strain>SC5314 / ATCC MYA-2876</strain>
    </source>
</reference>
<reference key="2">
    <citation type="journal article" date="2007" name="Genome Biol.">
        <title>Assembly of the Candida albicans genome into sixteen supercontigs aligned on the eight chromosomes.</title>
        <authorList>
            <person name="van het Hoog M."/>
            <person name="Rast T.J."/>
            <person name="Martchenko M."/>
            <person name="Grindle S."/>
            <person name="Dignard D."/>
            <person name="Hogues H."/>
            <person name="Cuomo C."/>
            <person name="Berriman M."/>
            <person name="Scherer S."/>
            <person name="Magee B.B."/>
            <person name="Whiteway M."/>
            <person name="Chibana H."/>
            <person name="Nantel A."/>
            <person name="Magee P.T."/>
        </authorList>
    </citation>
    <scope>GENOME REANNOTATION</scope>
    <source>
        <strain>SC5314 / ATCC MYA-2876</strain>
    </source>
</reference>
<reference key="3">
    <citation type="journal article" date="2013" name="Genome Biol.">
        <title>Assembly of a phased diploid Candida albicans genome facilitates allele-specific measurements and provides a simple model for repeat and indel structure.</title>
        <authorList>
            <person name="Muzzey D."/>
            <person name="Schwartz K."/>
            <person name="Weissman J.S."/>
            <person name="Sherlock G."/>
        </authorList>
    </citation>
    <scope>NUCLEOTIDE SEQUENCE [LARGE SCALE GENOMIC DNA]</scope>
    <scope>GENOME REANNOTATION</scope>
    <source>
        <strain>SC5314 / ATCC MYA-2876</strain>
    </source>
</reference>